<gene>
    <name type="primary">RNASE6</name>
</gene>
<keyword id="KW-0044">Antibiotic</keyword>
<keyword id="KW-0929">Antimicrobial</keyword>
<keyword id="KW-1015">Disulfide bond</keyword>
<keyword id="KW-0255">Endonuclease</keyword>
<keyword id="KW-0325">Glycoprotein</keyword>
<keyword id="KW-0378">Hydrolase</keyword>
<keyword id="KW-0458">Lysosome</keyword>
<keyword id="KW-0540">Nuclease</keyword>
<keyword id="KW-1185">Reference proteome</keyword>
<keyword id="KW-0964">Secreted</keyword>
<keyword id="KW-0732">Signal</keyword>
<proteinExistence type="inferred from homology"/>
<feature type="signal peptide" evidence="1">
    <location>
        <begin position="1"/>
        <end position="23"/>
    </location>
</feature>
<feature type="chain" id="PRO_0000030891" description="Ribonuclease K6">
    <location>
        <begin position="24"/>
        <end position="150"/>
    </location>
</feature>
<feature type="active site" description="Proton acceptor" evidence="2">
    <location>
        <position position="38"/>
    </location>
</feature>
<feature type="active site" description="Proton donor" evidence="2">
    <location>
        <position position="145"/>
    </location>
</feature>
<feature type="binding site" evidence="1">
    <location>
        <begin position="61"/>
        <end position="65"/>
    </location>
    <ligand>
        <name>substrate</name>
    </ligand>
</feature>
<feature type="binding site" evidence="1">
    <location>
        <position position="86"/>
    </location>
    <ligand>
        <name>substrate</name>
    </ligand>
</feature>
<feature type="binding site" evidence="1">
    <location>
        <position position="105"/>
    </location>
    <ligand>
        <name>substrate</name>
    </ligand>
</feature>
<feature type="site" description="Facilitates cleavage of polynucleotide substrates" evidence="3">
    <location>
        <position position="59"/>
    </location>
</feature>
<feature type="site" description="Critical for catalytic activity" evidence="4">
    <location>
        <position position="61"/>
    </location>
</feature>
<feature type="glycosylation site" description="N-linked (GlcNAc...) asparagine" evidence="5">
    <location>
        <position position="55"/>
    </location>
</feature>
<feature type="glycosylation site" description="N-linked (GlcNAc...) asparagine" evidence="5">
    <location>
        <position position="100"/>
    </location>
</feature>
<feature type="disulfide bond" evidence="3">
    <location>
        <begin position="46"/>
        <end position="104"/>
    </location>
</feature>
<feature type="disulfide bond" evidence="3">
    <location>
        <begin position="60"/>
        <end position="114"/>
    </location>
</feature>
<feature type="disulfide bond" evidence="3">
    <location>
        <begin position="78"/>
        <end position="129"/>
    </location>
</feature>
<feature type="disulfide bond" evidence="3">
    <location>
        <begin position="85"/>
        <end position="92"/>
    </location>
</feature>
<dbReference type="EC" id="3.1.27.-"/>
<dbReference type="EMBL" id="AF037088">
    <property type="protein sequence ID" value="AAB94750.1"/>
    <property type="molecule type" value="Genomic_DNA"/>
</dbReference>
<dbReference type="SMR" id="O46532"/>
<dbReference type="FunCoup" id="O46532">
    <property type="interactions" value="39"/>
</dbReference>
<dbReference type="STRING" id="9593.ENSGGOP00000027666"/>
<dbReference type="GlyCosmos" id="O46532">
    <property type="glycosylation" value="2 sites, No reported glycans"/>
</dbReference>
<dbReference type="eggNOG" id="ENOG502TDZ3">
    <property type="taxonomic scope" value="Eukaryota"/>
</dbReference>
<dbReference type="InParanoid" id="O46532"/>
<dbReference type="Proteomes" id="UP000001519">
    <property type="component" value="Unplaced"/>
</dbReference>
<dbReference type="GO" id="GO:0005615">
    <property type="term" value="C:extracellular space"/>
    <property type="evidence" value="ECO:0000318"/>
    <property type="project" value="GO_Central"/>
</dbReference>
<dbReference type="GO" id="GO:0005764">
    <property type="term" value="C:lysosome"/>
    <property type="evidence" value="ECO:0007669"/>
    <property type="project" value="UniProtKB-SubCell"/>
</dbReference>
<dbReference type="GO" id="GO:0004519">
    <property type="term" value="F:endonuclease activity"/>
    <property type="evidence" value="ECO:0007669"/>
    <property type="project" value="UniProtKB-KW"/>
</dbReference>
<dbReference type="GO" id="GO:0003676">
    <property type="term" value="F:nucleic acid binding"/>
    <property type="evidence" value="ECO:0007669"/>
    <property type="project" value="InterPro"/>
</dbReference>
<dbReference type="GO" id="GO:0004540">
    <property type="term" value="F:RNA nuclease activity"/>
    <property type="evidence" value="ECO:0000318"/>
    <property type="project" value="GO_Central"/>
</dbReference>
<dbReference type="GO" id="GO:0019731">
    <property type="term" value="P:antibacterial humoral response"/>
    <property type="evidence" value="ECO:0000318"/>
    <property type="project" value="GO_Central"/>
</dbReference>
<dbReference type="GO" id="GO:0061844">
    <property type="term" value="P:antimicrobial humoral immune response mediated by antimicrobial peptide"/>
    <property type="evidence" value="ECO:0000318"/>
    <property type="project" value="GO_Central"/>
</dbReference>
<dbReference type="GO" id="GO:0050829">
    <property type="term" value="P:defense response to Gram-negative bacterium"/>
    <property type="evidence" value="ECO:0000318"/>
    <property type="project" value="GO_Central"/>
</dbReference>
<dbReference type="GO" id="GO:0050830">
    <property type="term" value="P:defense response to Gram-positive bacterium"/>
    <property type="evidence" value="ECO:0000318"/>
    <property type="project" value="GO_Central"/>
</dbReference>
<dbReference type="GO" id="GO:0045087">
    <property type="term" value="P:innate immune response"/>
    <property type="evidence" value="ECO:0000318"/>
    <property type="project" value="GO_Central"/>
</dbReference>
<dbReference type="CDD" id="cd06265">
    <property type="entry name" value="RNase_A_canonical"/>
    <property type="match status" value="1"/>
</dbReference>
<dbReference type="FunFam" id="3.10.130.10:FF:000001">
    <property type="entry name" value="Ribonuclease pancreatic"/>
    <property type="match status" value="1"/>
</dbReference>
<dbReference type="Gene3D" id="3.10.130.10">
    <property type="entry name" value="Ribonuclease A-like domain"/>
    <property type="match status" value="1"/>
</dbReference>
<dbReference type="InterPro" id="IPR001427">
    <property type="entry name" value="RNaseA"/>
</dbReference>
<dbReference type="InterPro" id="IPR036816">
    <property type="entry name" value="RNaseA-like_dom_sf"/>
</dbReference>
<dbReference type="InterPro" id="IPR023411">
    <property type="entry name" value="RNaseA_AS"/>
</dbReference>
<dbReference type="InterPro" id="IPR023412">
    <property type="entry name" value="RNaseA_domain"/>
</dbReference>
<dbReference type="PANTHER" id="PTHR11437">
    <property type="entry name" value="RIBONUCLEASE"/>
    <property type="match status" value="1"/>
</dbReference>
<dbReference type="PANTHER" id="PTHR11437:SF4">
    <property type="entry name" value="RIBONUCLEASE K6"/>
    <property type="match status" value="1"/>
</dbReference>
<dbReference type="Pfam" id="PF00074">
    <property type="entry name" value="RnaseA"/>
    <property type="match status" value="1"/>
</dbReference>
<dbReference type="PRINTS" id="PR00794">
    <property type="entry name" value="RIBONUCLEASE"/>
</dbReference>
<dbReference type="SMART" id="SM00092">
    <property type="entry name" value="RNAse_Pc"/>
    <property type="match status" value="1"/>
</dbReference>
<dbReference type="SUPFAM" id="SSF54076">
    <property type="entry name" value="RNase A-like"/>
    <property type="match status" value="1"/>
</dbReference>
<dbReference type="PROSITE" id="PS00127">
    <property type="entry name" value="RNASE_PANCREATIC"/>
    <property type="match status" value="1"/>
</dbReference>
<comment type="function">
    <text evidence="3">Ribonuclease which shows a preference for the pyrimidines uridine and cytosine. Has potent antibacterial activity against a range of Gram-positive and Gram-negative bacteria, including P.aeruginosa, A.baumanii, M.luteus, S.aureus, E.faecalis, E.faecium, S.saprophyticus and E.coli. Causes loss of bacterial membrane integrity, and also promotes agglutination of Gram-negative bacteria. Probably contributes to urinary tract sterility. Bactericidal activity is independent of RNase activity.</text>
</comment>
<comment type="subunit">
    <text evidence="3">Interacts (via N-terminus) with bacterial lipopolysaccharide (LPS).</text>
</comment>
<comment type="subcellular location">
    <subcellularLocation>
        <location evidence="3">Secreted</location>
    </subcellularLocation>
    <subcellularLocation>
        <location evidence="3">Lysosome</location>
    </subcellularLocation>
    <subcellularLocation>
        <location evidence="3">Cytoplasmic granule</location>
    </subcellularLocation>
</comment>
<comment type="similarity">
    <text evidence="6">Belongs to the pancreatic ribonuclease family.</text>
</comment>
<evidence type="ECO:0000250" key="1"/>
<evidence type="ECO:0000250" key="2">
    <source>
        <dbReference type="UniProtKB" id="Q64438"/>
    </source>
</evidence>
<evidence type="ECO:0000250" key="3">
    <source>
        <dbReference type="UniProtKB" id="Q93091"/>
    </source>
</evidence>
<evidence type="ECO:0000250" key="4">
    <source>
        <dbReference type="UniProtKB" id="Q9H1E1"/>
    </source>
</evidence>
<evidence type="ECO:0000255" key="5"/>
<evidence type="ECO:0000305" key="6"/>
<protein>
    <recommendedName>
        <fullName>Ribonuclease K6</fullName>
        <shortName>RNase K6</shortName>
        <ecNumber>3.1.27.-</ecNumber>
    </recommendedName>
</protein>
<name>RNAS6_GORGO</name>
<accession>O46532</accession>
<organism>
    <name type="scientific">Gorilla gorilla gorilla</name>
    <name type="common">Western lowland gorilla</name>
    <dbReference type="NCBI Taxonomy" id="9595"/>
    <lineage>
        <taxon>Eukaryota</taxon>
        <taxon>Metazoa</taxon>
        <taxon>Chordata</taxon>
        <taxon>Craniata</taxon>
        <taxon>Vertebrata</taxon>
        <taxon>Euteleostomi</taxon>
        <taxon>Mammalia</taxon>
        <taxon>Eutheria</taxon>
        <taxon>Euarchontoglires</taxon>
        <taxon>Primates</taxon>
        <taxon>Haplorrhini</taxon>
        <taxon>Catarrhini</taxon>
        <taxon>Hominidae</taxon>
        <taxon>Gorilla</taxon>
    </lineage>
</organism>
<sequence>MVLCFPLLLLLLVLWGPVCPLHAWPKRLTKAHWFEIQHIQPSPLQCNRAMIGINNYTQHCKHQNTFLHDSFQNVAAVCDLLSIVCKNRRHNCHQSSKPVNMTDCRLTSGKYPQCRYSAAAQYKFFIVACDPPQKSDPPYKLVPVHLDSIL</sequence>
<reference key="1">
    <citation type="journal article" date="1998" name="Genome Res.">
        <title>Ribonuclease k6: chromosomal mapping and divergent rates of evolution within the RNase A gene superfamily.</title>
        <authorList>
            <person name="Deming M.S."/>
            <person name="Dyer K.D."/>
            <person name="Bankier A.T."/>
            <person name="Piper M.B."/>
            <person name="Dear P.H."/>
            <person name="Rosenberg H.F."/>
        </authorList>
    </citation>
    <scope>NUCLEOTIDE SEQUENCE [GENOMIC DNA]</scope>
</reference>